<protein>
    <recommendedName>
        <fullName evidence="1">Imidazole glycerol phosphate synthase subunit HisF</fullName>
        <ecNumber evidence="1">4.3.2.10</ecNumber>
    </recommendedName>
    <alternativeName>
        <fullName evidence="1">IGP synthase cyclase subunit</fullName>
    </alternativeName>
    <alternativeName>
        <fullName evidence="1">IGP synthase subunit HisF</fullName>
    </alternativeName>
    <alternativeName>
        <fullName evidence="1">ImGP synthase subunit HisF</fullName>
        <shortName evidence="1">IGPS subunit HisF</shortName>
    </alternativeName>
</protein>
<gene>
    <name evidence="1" type="primary">hisF</name>
    <name type="ordered locus">Bsph_0443</name>
</gene>
<accession>B1HVQ1</accession>
<keyword id="KW-0028">Amino-acid biosynthesis</keyword>
<keyword id="KW-0963">Cytoplasm</keyword>
<keyword id="KW-0368">Histidine biosynthesis</keyword>
<keyword id="KW-0456">Lyase</keyword>
<organism>
    <name type="scientific">Lysinibacillus sphaericus (strain C3-41)</name>
    <dbReference type="NCBI Taxonomy" id="444177"/>
    <lineage>
        <taxon>Bacteria</taxon>
        <taxon>Bacillati</taxon>
        <taxon>Bacillota</taxon>
        <taxon>Bacilli</taxon>
        <taxon>Bacillales</taxon>
        <taxon>Bacillaceae</taxon>
        <taxon>Lysinibacillus</taxon>
    </lineage>
</organism>
<proteinExistence type="inferred from homology"/>
<dbReference type="EC" id="4.3.2.10" evidence="1"/>
<dbReference type="EMBL" id="CP000817">
    <property type="protein sequence ID" value="ACA38070.1"/>
    <property type="molecule type" value="Genomic_DNA"/>
</dbReference>
<dbReference type="RefSeq" id="WP_012292227.1">
    <property type="nucleotide sequence ID" value="NC_010382.1"/>
</dbReference>
<dbReference type="SMR" id="B1HVQ1"/>
<dbReference type="EnsemblBacteria" id="ACA38070">
    <property type="protein sequence ID" value="ACA38070"/>
    <property type="gene ID" value="Bsph_0443"/>
</dbReference>
<dbReference type="KEGG" id="lsp:Bsph_0443"/>
<dbReference type="HOGENOM" id="CLU_048577_4_0_9"/>
<dbReference type="UniPathway" id="UPA00031">
    <property type="reaction ID" value="UER00010"/>
</dbReference>
<dbReference type="Proteomes" id="UP000002164">
    <property type="component" value="Chromosome"/>
</dbReference>
<dbReference type="GO" id="GO:0005737">
    <property type="term" value="C:cytoplasm"/>
    <property type="evidence" value="ECO:0007669"/>
    <property type="project" value="UniProtKB-SubCell"/>
</dbReference>
<dbReference type="GO" id="GO:0000107">
    <property type="term" value="F:imidazoleglycerol-phosphate synthase activity"/>
    <property type="evidence" value="ECO:0007669"/>
    <property type="project" value="UniProtKB-UniRule"/>
</dbReference>
<dbReference type="GO" id="GO:0016829">
    <property type="term" value="F:lyase activity"/>
    <property type="evidence" value="ECO:0007669"/>
    <property type="project" value="UniProtKB-KW"/>
</dbReference>
<dbReference type="GO" id="GO:0000105">
    <property type="term" value="P:L-histidine biosynthetic process"/>
    <property type="evidence" value="ECO:0007669"/>
    <property type="project" value="UniProtKB-UniRule"/>
</dbReference>
<dbReference type="CDD" id="cd04731">
    <property type="entry name" value="HisF"/>
    <property type="match status" value="1"/>
</dbReference>
<dbReference type="FunFam" id="3.20.20.70:FF:000006">
    <property type="entry name" value="Imidazole glycerol phosphate synthase subunit HisF"/>
    <property type="match status" value="1"/>
</dbReference>
<dbReference type="Gene3D" id="3.20.20.70">
    <property type="entry name" value="Aldolase class I"/>
    <property type="match status" value="1"/>
</dbReference>
<dbReference type="HAMAP" id="MF_01013">
    <property type="entry name" value="HisF"/>
    <property type="match status" value="1"/>
</dbReference>
<dbReference type="InterPro" id="IPR013785">
    <property type="entry name" value="Aldolase_TIM"/>
</dbReference>
<dbReference type="InterPro" id="IPR006062">
    <property type="entry name" value="His_biosynth"/>
</dbReference>
<dbReference type="InterPro" id="IPR004651">
    <property type="entry name" value="HisF"/>
</dbReference>
<dbReference type="InterPro" id="IPR050064">
    <property type="entry name" value="IGPS_HisA/HisF"/>
</dbReference>
<dbReference type="InterPro" id="IPR011060">
    <property type="entry name" value="RibuloseP-bd_barrel"/>
</dbReference>
<dbReference type="NCBIfam" id="TIGR00735">
    <property type="entry name" value="hisF"/>
    <property type="match status" value="1"/>
</dbReference>
<dbReference type="PANTHER" id="PTHR21235:SF2">
    <property type="entry name" value="IMIDAZOLE GLYCEROL PHOSPHATE SYNTHASE HISHF"/>
    <property type="match status" value="1"/>
</dbReference>
<dbReference type="PANTHER" id="PTHR21235">
    <property type="entry name" value="IMIDAZOLE GLYCEROL PHOSPHATE SYNTHASE SUBUNIT HISF/H IGP SYNTHASE SUBUNIT HISF/H"/>
    <property type="match status" value="1"/>
</dbReference>
<dbReference type="Pfam" id="PF00977">
    <property type="entry name" value="His_biosynth"/>
    <property type="match status" value="1"/>
</dbReference>
<dbReference type="SUPFAM" id="SSF51366">
    <property type="entry name" value="Ribulose-phoshate binding barrel"/>
    <property type="match status" value="1"/>
</dbReference>
<reference key="1">
    <citation type="journal article" date="2008" name="J. Bacteriol.">
        <title>Complete genome sequence of the mosquitocidal bacterium Bacillus sphaericus C3-41 and comparison with those of closely related Bacillus species.</title>
        <authorList>
            <person name="Hu X."/>
            <person name="Fan W."/>
            <person name="Han B."/>
            <person name="Liu H."/>
            <person name="Zheng D."/>
            <person name="Li Q."/>
            <person name="Dong W."/>
            <person name="Yan J."/>
            <person name="Gao M."/>
            <person name="Berry C."/>
            <person name="Yuan Z."/>
        </authorList>
    </citation>
    <scope>NUCLEOTIDE SEQUENCE [LARGE SCALE GENOMIC DNA]</scope>
    <source>
        <strain>C3-41</strain>
    </source>
</reference>
<name>HIS6_LYSSC</name>
<sequence length="253" mass="27391">MLTKRIIPCLDVKEGRVVKGIQFVSIRDAGDPVELAKFYDEQGADELVFLDISASHEGRETMIEVVQQTAATLAIPFTVGGGIRTLDDMKRILRAGADKVSVNTSALERPSLIQEGSDFFGAQCIVVAIDARYSEEDGTWMVYTHGGRNKTTWSAIDWAKEAVRLGAGEILLTSMNQDGEKSGFDLGLTKAVREAVSVPVIASGGAGYAEHFYEVLAEEVDADAALAASIFHYKETSVAQVKEYLRAKGVAVR</sequence>
<feature type="chain" id="PRO_1000190578" description="Imidazole glycerol phosphate synthase subunit HisF">
    <location>
        <begin position="1"/>
        <end position="253"/>
    </location>
</feature>
<feature type="active site" evidence="1">
    <location>
        <position position="11"/>
    </location>
</feature>
<feature type="active site" evidence="1">
    <location>
        <position position="130"/>
    </location>
</feature>
<evidence type="ECO:0000255" key="1">
    <source>
        <dbReference type="HAMAP-Rule" id="MF_01013"/>
    </source>
</evidence>
<comment type="function">
    <text evidence="1">IGPS catalyzes the conversion of PRFAR and glutamine to IGP, AICAR and glutamate. The HisF subunit catalyzes the cyclization activity that produces IGP and AICAR from PRFAR using the ammonia provided by the HisH subunit.</text>
</comment>
<comment type="catalytic activity">
    <reaction evidence="1">
        <text>5-[(5-phospho-1-deoxy-D-ribulos-1-ylimino)methylamino]-1-(5-phospho-beta-D-ribosyl)imidazole-4-carboxamide + L-glutamine = D-erythro-1-(imidazol-4-yl)glycerol 3-phosphate + 5-amino-1-(5-phospho-beta-D-ribosyl)imidazole-4-carboxamide + L-glutamate + H(+)</text>
        <dbReference type="Rhea" id="RHEA:24793"/>
        <dbReference type="ChEBI" id="CHEBI:15378"/>
        <dbReference type="ChEBI" id="CHEBI:29985"/>
        <dbReference type="ChEBI" id="CHEBI:58278"/>
        <dbReference type="ChEBI" id="CHEBI:58359"/>
        <dbReference type="ChEBI" id="CHEBI:58475"/>
        <dbReference type="ChEBI" id="CHEBI:58525"/>
        <dbReference type="EC" id="4.3.2.10"/>
    </reaction>
</comment>
<comment type="pathway">
    <text evidence="1">Amino-acid biosynthesis; L-histidine biosynthesis; L-histidine from 5-phospho-alpha-D-ribose 1-diphosphate: step 5/9.</text>
</comment>
<comment type="subunit">
    <text evidence="1">Heterodimer of HisH and HisF.</text>
</comment>
<comment type="subcellular location">
    <subcellularLocation>
        <location evidence="1">Cytoplasm</location>
    </subcellularLocation>
</comment>
<comment type="similarity">
    <text evidence="1">Belongs to the HisA/HisF family.</text>
</comment>